<reference key="1">
    <citation type="journal article" date="2005" name="Nucleic Acids Res.">
        <title>The genome sequence of Xanthomonas oryzae pathovar oryzae KACC10331, the bacterial blight pathogen of rice.</title>
        <authorList>
            <person name="Lee B.-M."/>
            <person name="Park Y.-J."/>
            <person name="Park D.-S."/>
            <person name="Kang H.-W."/>
            <person name="Kim J.-G."/>
            <person name="Song E.-S."/>
            <person name="Park I.-C."/>
            <person name="Yoon U.-H."/>
            <person name="Hahn J.-H."/>
            <person name="Koo B.-S."/>
            <person name="Lee G.-B."/>
            <person name="Kim H."/>
            <person name="Park H.-S."/>
            <person name="Yoon K.-O."/>
            <person name="Kim J.-H."/>
            <person name="Jung C.-H."/>
            <person name="Koh N.-H."/>
            <person name="Seo J.-S."/>
            <person name="Go S.-J."/>
        </authorList>
    </citation>
    <scope>NUCLEOTIDE SEQUENCE [LARGE SCALE GENOMIC DNA]</scope>
    <source>
        <strain>KACC10331 / KXO85</strain>
    </source>
</reference>
<protein>
    <recommendedName>
        <fullName evidence="1">Cytochrome c biogenesis ATP-binding export protein CcmA</fullName>
        <ecNumber evidence="1">7.6.2.5</ecNumber>
    </recommendedName>
    <alternativeName>
        <fullName evidence="1">Heme exporter protein A</fullName>
    </alternativeName>
</protein>
<organism>
    <name type="scientific">Xanthomonas oryzae pv. oryzae (strain KACC10331 / KXO85)</name>
    <dbReference type="NCBI Taxonomy" id="291331"/>
    <lineage>
        <taxon>Bacteria</taxon>
        <taxon>Pseudomonadati</taxon>
        <taxon>Pseudomonadota</taxon>
        <taxon>Gammaproteobacteria</taxon>
        <taxon>Lysobacterales</taxon>
        <taxon>Lysobacteraceae</taxon>
        <taxon>Xanthomonas</taxon>
    </lineage>
</organism>
<name>CCMA_XANOR</name>
<keyword id="KW-0067">ATP-binding</keyword>
<keyword id="KW-0997">Cell inner membrane</keyword>
<keyword id="KW-1003">Cell membrane</keyword>
<keyword id="KW-0201">Cytochrome c-type biogenesis</keyword>
<keyword id="KW-0472">Membrane</keyword>
<keyword id="KW-0547">Nucleotide-binding</keyword>
<keyword id="KW-1185">Reference proteome</keyword>
<keyword id="KW-1278">Translocase</keyword>
<keyword id="KW-0813">Transport</keyword>
<dbReference type="EC" id="7.6.2.5" evidence="1"/>
<dbReference type="EMBL" id="AE013598">
    <property type="protein sequence ID" value="AAW75409.1"/>
    <property type="status" value="ALT_INIT"/>
    <property type="molecule type" value="Genomic_DNA"/>
</dbReference>
<dbReference type="SMR" id="Q5H0W2"/>
<dbReference type="STRING" id="291331.XOO2155"/>
<dbReference type="KEGG" id="xoo:XOO2155"/>
<dbReference type="HOGENOM" id="CLU_000604_1_2_6"/>
<dbReference type="Proteomes" id="UP000006735">
    <property type="component" value="Chromosome"/>
</dbReference>
<dbReference type="GO" id="GO:0005886">
    <property type="term" value="C:plasma membrane"/>
    <property type="evidence" value="ECO:0007669"/>
    <property type="project" value="UniProtKB-SubCell"/>
</dbReference>
<dbReference type="GO" id="GO:0015439">
    <property type="term" value="F:ABC-type heme transporter activity"/>
    <property type="evidence" value="ECO:0007669"/>
    <property type="project" value="UniProtKB-EC"/>
</dbReference>
<dbReference type="GO" id="GO:0005524">
    <property type="term" value="F:ATP binding"/>
    <property type="evidence" value="ECO:0007669"/>
    <property type="project" value="UniProtKB-KW"/>
</dbReference>
<dbReference type="GO" id="GO:0016887">
    <property type="term" value="F:ATP hydrolysis activity"/>
    <property type="evidence" value="ECO:0007669"/>
    <property type="project" value="InterPro"/>
</dbReference>
<dbReference type="GO" id="GO:0017004">
    <property type="term" value="P:cytochrome complex assembly"/>
    <property type="evidence" value="ECO:0007669"/>
    <property type="project" value="UniProtKB-KW"/>
</dbReference>
<dbReference type="Gene3D" id="3.40.50.300">
    <property type="entry name" value="P-loop containing nucleotide triphosphate hydrolases"/>
    <property type="match status" value="1"/>
</dbReference>
<dbReference type="InterPro" id="IPR003593">
    <property type="entry name" value="AAA+_ATPase"/>
</dbReference>
<dbReference type="InterPro" id="IPR003439">
    <property type="entry name" value="ABC_transporter-like_ATP-bd"/>
</dbReference>
<dbReference type="InterPro" id="IPR017871">
    <property type="entry name" value="ABC_transporter-like_CS"/>
</dbReference>
<dbReference type="InterPro" id="IPR005895">
    <property type="entry name" value="ABC_transptr_haem_export_CcmA"/>
</dbReference>
<dbReference type="InterPro" id="IPR027417">
    <property type="entry name" value="P-loop_NTPase"/>
</dbReference>
<dbReference type="NCBIfam" id="TIGR01189">
    <property type="entry name" value="ccmA"/>
    <property type="match status" value="1"/>
</dbReference>
<dbReference type="NCBIfam" id="NF010061">
    <property type="entry name" value="PRK13538.1"/>
    <property type="match status" value="1"/>
</dbReference>
<dbReference type="PANTHER" id="PTHR43499">
    <property type="entry name" value="ABC TRANSPORTER I FAMILY MEMBER 1"/>
    <property type="match status" value="1"/>
</dbReference>
<dbReference type="PANTHER" id="PTHR43499:SF1">
    <property type="entry name" value="ABC TRANSPORTER I FAMILY MEMBER 1"/>
    <property type="match status" value="1"/>
</dbReference>
<dbReference type="Pfam" id="PF00005">
    <property type="entry name" value="ABC_tran"/>
    <property type="match status" value="1"/>
</dbReference>
<dbReference type="SMART" id="SM00382">
    <property type="entry name" value="AAA"/>
    <property type="match status" value="1"/>
</dbReference>
<dbReference type="SUPFAM" id="SSF52540">
    <property type="entry name" value="P-loop containing nucleoside triphosphate hydrolases"/>
    <property type="match status" value="1"/>
</dbReference>
<dbReference type="PROSITE" id="PS00211">
    <property type="entry name" value="ABC_TRANSPORTER_1"/>
    <property type="match status" value="1"/>
</dbReference>
<dbReference type="PROSITE" id="PS50893">
    <property type="entry name" value="ABC_TRANSPORTER_2"/>
    <property type="match status" value="1"/>
</dbReference>
<dbReference type="PROSITE" id="PS51243">
    <property type="entry name" value="CCMA"/>
    <property type="match status" value="1"/>
</dbReference>
<accession>Q5H0W2</accession>
<feature type="chain" id="PRO_0000271968" description="Cytochrome c biogenesis ATP-binding export protein CcmA">
    <location>
        <begin position="1"/>
        <end position="214"/>
    </location>
</feature>
<feature type="domain" description="ABC transporter" evidence="1">
    <location>
        <begin position="12"/>
        <end position="214"/>
    </location>
</feature>
<feature type="binding site" evidence="1">
    <location>
        <begin position="44"/>
        <end position="51"/>
    </location>
    <ligand>
        <name>ATP</name>
        <dbReference type="ChEBI" id="CHEBI:30616"/>
    </ligand>
</feature>
<evidence type="ECO:0000255" key="1">
    <source>
        <dbReference type="HAMAP-Rule" id="MF_01707"/>
    </source>
</evidence>
<evidence type="ECO:0000305" key="2"/>
<comment type="function">
    <text evidence="1">Part of the ABC transporter complex CcmAB involved in the biogenesis of c-type cytochromes; once thought to export heme, this seems not to be the case, but its exact role is uncertain. Responsible for energy coupling to the transport system.</text>
</comment>
<comment type="catalytic activity">
    <reaction evidence="1">
        <text>heme b(in) + ATP + H2O = heme b(out) + ADP + phosphate + H(+)</text>
        <dbReference type="Rhea" id="RHEA:19261"/>
        <dbReference type="ChEBI" id="CHEBI:15377"/>
        <dbReference type="ChEBI" id="CHEBI:15378"/>
        <dbReference type="ChEBI" id="CHEBI:30616"/>
        <dbReference type="ChEBI" id="CHEBI:43474"/>
        <dbReference type="ChEBI" id="CHEBI:60344"/>
        <dbReference type="ChEBI" id="CHEBI:456216"/>
        <dbReference type="EC" id="7.6.2.5"/>
    </reaction>
</comment>
<comment type="subunit">
    <text evidence="1">The complex is composed of two ATP-binding proteins (CcmA) and two transmembrane proteins (CcmB).</text>
</comment>
<comment type="subcellular location">
    <subcellularLocation>
        <location evidence="1">Cell inner membrane</location>
        <topology evidence="1">Peripheral membrane protein</topology>
    </subcellularLocation>
</comment>
<comment type="similarity">
    <text evidence="1">Belongs to the ABC transporter superfamily. CcmA exporter (TC 3.A.1.107) family.</text>
</comment>
<comment type="sequence caution" evidence="2">
    <conflict type="erroneous initiation">
        <sequence resource="EMBL-CDS" id="AAW75409"/>
    </conflict>
</comment>
<gene>
    <name evidence="1" type="primary">ccmA</name>
    <name type="ordered locus">XOO2155</name>
</gene>
<proteinExistence type="inferred from homology"/>
<sequence>MIEPLHTAPPLLAAHALAFSRNEEPVFGPLDFHVDAGEALLVQGDNGAGKTTLLRVLAGLLHVEHGQIQIDGKTAKRGDRSRFMAYLGHLPGLKADLSTLENLHFLCGLHGRRAKQMPGSALAIVGLAGYEDALVRQLSAGQRKRLALARLWLSPAPLWLLDEPYANLDLDGITLVNRMISAHLRGGGAALVTTHGAYAAPPVRTRMLTLEAAA</sequence>